<protein>
    <recommendedName>
        <fullName evidence="1">Photosystem I P700 chlorophyll a apoprotein A2</fullName>
        <ecNumber evidence="1">1.97.1.12</ecNumber>
    </recommendedName>
    <alternativeName>
        <fullName evidence="1">PSI-B</fullName>
    </alternativeName>
    <alternativeName>
        <fullName evidence="1">PsaB</fullName>
    </alternativeName>
</protein>
<dbReference type="EC" id="1.97.1.12" evidence="1"/>
<dbReference type="EMBL" id="EF115542">
    <property type="protein sequence ID" value="ABK79495.1"/>
    <property type="molecule type" value="Genomic_DNA"/>
</dbReference>
<dbReference type="RefSeq" id="YP_899406.1">
    <property type="nucleotide sequence ID" value="NC_008602.1"/>
</dbReference>
<dbReference type="SMR" id="A1E9S3"/>
<dbReference type="FunCoup" id="A1E9S3">
    <property type="interactions" value="365"/>
</dbReference>
<dbReference type="STRING" id="4558.A1E9S3"/>
<dbReference type="GeneID" id="4549119"/>
<dbReference type="KEGG" id="sbi:4549119"/>
<dbReference type="eggNOG" id="ENOG502QRYE">
    <property type="taxonomic scope" value="Eukaryota"/>
</dbReference>
<dbReference type="InParanoid" id="A1E9S3"/>
<dbReference type="OrthoDB" id="15at2759"/>
<dbReference type="Proteomes" id="UP000000768">
    <property type="component" value="Chloroplast"/>
</dbReference>
<dbReference type="ExpressionAtlas" id="A1E9S3">
    <property type="expression patterns" value="baseline"/>
</dbReference>
<dbReference type="GO" id="GO:0009535">
    <property type="term" value="C:chloroplast thylakoid membrane"/>
    <property type="evidence" value="ECO:0007669"/>
    <property type="project" value="UniProtKB-SubCell"/>
</dbReference>
<dbReference type="GO" id="GO:0009522">
    <property type="term" value="C:photosystem I"/>
    <property type="evidence" value="ECO:0007669"/>
    <property type="project" value="UniProtKB-KW"/>
</dbReference>
<dbReference type="GO" id="GO:0051539">
    <property type="term" value="F:4 iron, 4 sulfur cluster binding"/>
    <property type="evidence" value="ECO:0007669"/>
    <property type="project" value="UniProtKB-KW"/>
</dbReference>
<dbReference type="GO" id="GO:0016168">
    <property type="term" value="F:chlorophyll binding"/>
    <property type="evidence" value="ECO:0007669"/>
    <property type="project" value="UniProtKB-KW"/>
</dbReference>
<dbReference type="GO" id="GO:0009055">
    <property type="term" value="F:electron transfer activity"/>
    <property type="evidence" value="ECO:0007669"/>
    <property type="project" value="UniProtKB-UniRule"/>
</dbReference>
<dbReference type="GO" id="GO:0000287">
    <property type="term" value="F:magnesium ion binding"/>
    <property type="evidence" value="ECO:0007669"/>
    <property type="project" value="UniProtKB-UniRule"/>
</dbReference>
<dbReference type="GO" id="GO:0016491">
    <property type="term" value="F:oxidoreductase activity"/>
    <property type="evidence" value="ECO:0007669"/>
    <property type="project" value="UniProtKB-KW"/>
</dbReference>
<dbReference type="GO" id="GO:0015979">
    <property type="term" value="P:photosynthesis"/>
    <property type="evidence" value="ECO:0007669"/>
    <property type="project" value="UniProtKB-UniRule"/>
</dbReference>
<dbReference type="FunFam" id="1.20.1130.10:FF:000001">
    <property type="entry name" value="Photosystem I P700 chlorophyll a apoprotein A2"/>
    <property type="match status" value="1"/>
</dbReference>
<dbReference type="Gene3D" id="1.20.1130.10">
    <property type="entry name" value="Photosystem I PsaA/PsaB"/>
    <property type="match status" value="1"/>
</dbReference>
<dbReference type="HAMAP" id="MF_00482">
    <property type="entry name" value="PSI_PsaB"/>
    <property type="match status" value="1"/>
</dbReference>
<dbReference type="InterPro" id="IPR001280">
    <property type="entry name" value="PSI_PsaA/B"/>
</dbReference>
<dbReference type="InterPro" id="IPR020586">
    <property type="entry name" value="PSI_PsaA/B_CS"/>
</dbReference>
<dbReference type="InterPro" id="IPR036408">
    <property type="entry name" value="PSI_PsaA/B_sf"/>
</dbReference>
<dbReference type="InterPro" id="IPR006244">
    <property type="entry name" value="PSI_PsaB"/>
</dbReference>
<dbReference type="NCBIfam" id="TIGR01336">
    <property type="entry name" value="psaB"/>
    <property type="match status" value="1"/>
</dbReference>
<dbReference type="PANTHER" id="PTHR30128">
    <property type="entry name" value="OUTER MEMBRANE PROTEIN, OMPA-RELATED"/>
    <property type="match status" value="1"/>
</dbReference>
<dbReference type="PANTHER" id="PTHR30128:SF19">
    <property type="entry name" value="PHOTOSYSTEM I P700 CHLOROPHYLL A APOPROTEIN A1-RELATED"/>
    <property type="match status" value="1"/>
</dbReference>
<dbReference type="Pfam" id="PF00223">
    <property type="entry name" value="PsaA_PsaB"/>
    <property type="match status" value="1"/>
</dbReference>
<dbReference type="PIRSF" id="PIRSF002905">
    <property type="entry name" value="PSI_A"/>
    <property type="match status" value="1"/>
</dbReference>
<dbReference type="PRINTS" id="PR00257">
    <property type="entry name" value="PHOTSYSPSAAB"/>
</dbReference>
<dbReference type="SUPFAM" id="SSF81558">
    <property type="entry name" value="Photosystem I subunits PsaA/PsaB"/>
    <property type="match status" value="1"/>
</dbReference>
<dbReference type="PROSITE" id="PS00419">
    <property type="entry name" value="PHOTOSYSTEM_I_PSAAB"/>
    <property type="match status" value="1"/>
</dbReference>
<proteinExistence type="inferred from homology"/>
<comment type="function">
    <text evidence="1">PsaA and PsaB bind P700, the primary electron donor of photosystem I (PSI), as well as the electron acceptors A0, A1 and FX. PSI is a plastocyanin-ferredoxin oxidoreductase, converting photonic excitation into a charge separation, which transfers an electron from the donor P700 chlorophyll pair to the spectroscopically characterized acceptors A0, A1, FX, FA and FB in turn. Oxidized P700 is reduced on the lumenal side of the thylakoid membrane by plastocyanin.</text>
</comment>
<comment type="catalytic activity">
    <reaction evidence="1">
        <text>reduced [plastocyanin] + hnu + oxidized [2Fe-2S]-[ferredoxin] = oxidized [plastocyanin] + reduced [2Fe-2S]-[ferredoxin]</text>
        <dbReference type="Rhea" id="RHEA:30407"/>
        <dbReference type="Rhea" id="RHEA-COMP:10000"/>
        <dbReference type="Rhea" id="RHEA-COMP:10001"/>
        <dbReference type="Rhea" id="RHEA-COMP:10039"/>
        <dbReference type="Rhea" id="RHEA-COMP:10040"/>
        <dbReference type="ChEBI" id="CHEBI:29036"/>
        <dbReference type="ChEBI" id="CHEBI:30212"/>
        <dbReference type="ChEBI" id="CHEBI:33737"/>
        <dbReference type="ChEBI" id="CHEBI:33738"/>
        <dbReference type="ChEBI" id="CHEBI:49552"/>
        <dbReference type="EC" id="1.97.1.12"/>
    </reaction>
</comment>
<comment type="cofactor">
    <text evidence="1">P700 is a chlorophyll a/chlorophyll a' dimer, A0 is one or more chlorophyll a, A1 is one or both phylloquinones and FX is a shared 4Fe-4S iron-sulfur center.</text>
</comment>
<comment type="subunit">
    <text evidence="1">The PsaA/B heterodimer binds the P700 chlorophyll special pair and subsequent electron acceptors. PSI consists of a core antenna complex that captures photons, and an electron transfer chain that converts photonic excitation into a charge separation. The eukaryotic PSI reaction center is composed of at least 11 subunits.</text>
</comment>
<comment type="subcellular location">
    <subcellularLocation>
        <location>Plastid</location>
        <location>Chloroplast thylakoid membrane</location>
        <topology>Multi-pass membrane protein</topology>
    </subcellularLocation>
</comment>
<comment type="similarity">
    <text evidence="1">Belongs to the PsaA/PsaB family.</text>
</comment>
<geneLocation type="chloroplast"/>
<organism>
    <name type="scientific">Sorghum bicolor</name>
    <name type="common">Sorghum</name>
    <name type="synonym">Sorghum vulgare</name>
    <dbReference type="NCBI Taxonomy" id="4558"/>
    <lineage>
        <taxon>Eukaryota</taxon>
        <taxon>Viridiplantae</taxon>
        <taxon>Streptophyta</taxon>
        <taxon>Embryophyta</taxon>
        <taxon>Tracheophyta</taxon>
        <taxon>Spermatophyta</taxon>
        <taxon>Magnoliopsida</taxon>
        <taxon>Liliopsida</taxon>
        <taxon>Poales</taxon>
        <taxon>Poaceae</taxon>
        <taxon>PACMAD clade</taxon>
        <taxon>Panicoideae</taxon>
        <taxon>Andropogonodae</taxon>
        <taxon>Andropogoneae</taxon>
        <taxon>Sorghinae</taxon>
        <taxon>Sorghum</taxon>
    </lineage>
</organism>
<name>PSAB_SORBI</name>
<reference key="1">
    <citation type="journal article" date="2007" name="Theor. Appl. Genet.">
        <title>Complete chloroplast genome sequences of Hordeum vulgare, Sorghum bicolor and Agrostis stolonifera, and comparative analyses with other grass genomes.</title>
        <authorList>
            <person name="Saski C."/>
            <person name="Lee S.-B."/>
            <person name="Fjellheim S."/>
            <person name="Guda C."/>
            <person name="Jansen R.K."/>
            <person name="Luo H."/>
            <person name="Tomkins J."/>
            <person name="Rognli O.A."/>
            <person name="Daniell H."/>
            <person name="Clarke J.L."/>
        </authorList>
    </citation>
    <scope>NUCLEOTIDE SEQUENCE [LARGE SCALE GENOMIC DNA]</scope>
    <source>
        <strain>cv. BTx623</strain>
    </source>
</reference>
<accession>A1E9S3</accession>
<gene>
    <name evidence="1" type="primary">psaB</name>
</gene>
<keyword id="KW-0004">4Fe-4S</keyword>
<keyword id="KW-0148">Chlorophyll</keyword>
<keyword id="KW-0150">Chloroplast</keyword>
<keyword id="KW-0157">Chromophore</keyword>
<keyword id="KW-0249">Electron transport</keyword>
<keyword id="KW-0408">Iron</keyword>
<keyword id="KW-0411">Iron-sulfur</keyword>
<keyword id="KW-0460">Magnesium</keyword>
<keyword id="KW-0472">Membrane</keyword>
<keyword id="KW-0479">Metal-binding</keyword>
<keyword id="KW-0560">Oxidoreductase</keyword>
<keyword id="KW-0602">Photosynthesis</keyword>
<keyword id="KW-0603">Photosystem I</keyword>
<keyword id="KW-0934">Plastid</keyword>
<keyword id="KW-1185">Reference proteome</keyword>
<keyword id="KW-0793">Thylakoid</keyword>
<keyword id="KW-0812">Transmembrane</keyword>
<keyword id="KW-1133">Transmembrane helix</keyword>
<keyword id="KW-0813">Transport</keyword>
<sequence length="734" mass="82570">MELRFPRFSQGLAQDPTTRRIWFGIATAHDFESHDDITEERLYQNIFASHFGQLAIIFLWTSGNLFHVAWQGNFESWIQDPLHVRPIAHAIWDPHFGQPAVEAFTRGGAAGPVNIAYSGVYQWWYTIGLRTNEDLYTGALFLLFLSTLSLIGGWLHLQPKWKPSLSWFKNAESRLNHHLSGLFGVSSLAWTGHLVHVAIPGSRGEYVRWNNFLDVLPYPQGLGPLLTGQWNLYAQNPDSSNHLFGTTQGAGTAILTLLGGFHPQTQSLWLTDIAHHHLAIAFIFLIAGHMYRTNFGIGHSIKDLLEAHTPPGGRLGRGHKGLYDTINNSIHFQLGLALASLGVITSLVAQHMYSLPAYAFIAQDFTTQAALYTHHQYIAGFIMTGAFAHGAIFFIRDYNPEQNEDNVLARMLDHKEAIISHLSWASLFLGFHTLGLYVHNDVMLAFGTPEKQILIEPIFAQWIQSAHGKTTYGFDILLSSTNGPAFNAGRNIWLPGWLNAVNENSNSLFLTIGPGDFLVHHAIALGLHTTTLILVKGALDARGSKLMPDKKDFGYSFPCDGPGRGGTCDISAWDAFYLAVFWMLNTIGWVTFYWHWKHITLWQGNVSQFNESSTYLMGWLRDYLWLNSSQLINGYNPFGMNSLSVWAWMFLFGHLVWATGFMFLISWRGYWQELIETLAWAHERTPLANLIRWRDKPVALSIVQARLVGLAHFSVGYIFTYAAFLIASTSGKFG</sequence>
<evidence type="ECO:0000255" key="1">
    <source>
        <dbReference type="HAMAP-Rule" id="MF_00482"/>
    </source>
</evidence>
<feature type="chain" id="PRO_0000277135" description="Photosystem I P700 chlorophyll a apoprotein A2">
    <location>
        <begin position="1"/>
        <end position="734"/>
    </location>
</feature>
<feature type="transmembrane region" description="Helical; Name=I" evidence="1">
    <location>
        <begin position="46"/>
        <end position="69"/>
    </location>
</feature>
<feature type="transmembrane region" description="Helical; Name=II" evidence="1">
    <location>
        <begin position="135"/>
        <end position="158"/>
    </location>
</feature>
<feature type="transmembrane region" description="Helical; Name=III" evidence="1">
    <location>
        <begin position="175"/>
        <end position="199"/>
    </location>
</feature>
<feature type="transmembrane region" description="Helical; Name=IV" evidence="1">
    <location>
        <begin position="273"/>
        <end position="291"/>
    </location>
</feature>
<feature type="transmembrane region" description="Helical; Name=V" evidence="1">
    <location>
        <begin position="330"/>
        <end position="353"/>
    </location>
</feature>
<feature type="transmembrane region" description="Helical; Name=VI" evidence="1">
    <location>
        <begin position="369"/>
        <end position="395"/>
    </location>
</feature>
<feature type="transmembrane region" description="Helical; Name=VII" evidence="1">
    <location>
        <begin position="417"/>
        <end position="439"/>
    </location>
</feature>
<feature type="transmembrane region" description="Helical; Name=VIII" evidence="1">
    <location>
        <begin position="517"/>
        <end position="535"/>
    </location>
</feature>
<feature type="transmembrane region" description="Helical; Name=IX" evidence="1">
    <location>
        <begin position="575"/>
        <end position="596"/>
    </location>
</feature>
<feature type="transmembrane region" description="Helical; Name=X" evidence="1">
    <location>
        <begin position="643"/>
        <end position="665"/>
    </location>
</feature>
<feature type="transmembrane region" description="Helical; Name=XI" evidence="1">
    <location>
        <begin position="707"/>
        <end position="727"/>
    </location>
</feature>
<feature type="binding site" evidence="1">
    <location>
        <position position="559"/>
    </location>
    <ligand>
        <name>[4Fe-4S] cluster</name>
        <dbReference type="ChEBI" id="CHEBI:49883"/>
        <note>ligand shared between dimeric partners</note>
    </ligand>
</feature>
<feature type="binding site" evidence="1">
    <location>
        <position position="568"/>
    </location>
    <ligand>
        <name>[4Fe-4S] cluster</name>
        <dbReference type="ChEBI" id="CHEBI:49883"/>
        <note>ligand shared between dimeric partners</note>
    </ligand>
</feature>
<feature type="binding site" description="axial binding residue" evidence="1">
    <location>
        <position position="654"/>
    </location>
    <ligand>
        <name>chlorophyll a</name>
        <dbReference type="ChEBI" id="CHEBI:58416"/>
        <label>B1</label>
    </ligand>
    <ligandPart>
        <name>Mg</name>
        <dbReference type="ChEBI" id="CHEBI:25107"/>
    </ligandPart>
</feature>
<feature type="binding site" description="axial binding residue" evidence="1">
    <location>
        <position position="662"/>
    </location>
    <ligand>
        <name>chlorophyll a</name>
        <dbReference type="ChEBI" id="CHEBI:58416"/>
        <label>B3</label>
    </ligand>
    <ligandPart>
        <name>Mg</name>
        <dbReference type="ChEBI" id="CHEBI:25107"/>
    </ligandPart>
</feature>
<feature type="binding site" evidence="1">
    <location>
        <position position="670"/>
    </location>
    <ligand>
        <name>chlorophyll a</name>
        <dbReference type="ChEBI" id="CHEBI:58416"/>
        <label>B3</label>
    </ligand>
</feature>
<feature type="binding site" evidence="1">
    <location>
        <position position="671"/>
    </location>
    <ligand>
        <name>phylloquinone</name>
        <dbReference type="ChEBI" id="CHEBI:18067"/>
        <label>B</label>
    </ligand>
</feature>